<name>GUAAA_PYRAB</name>
<feature type="chain" id="PRO_0000140228" description="GMP synthase [glutamine-hydrolyzing] subunit A">
    <location>
        <begin position="1"/>
        <end position="188"/>
    </location>
</feature>
<feature type="domain" description="Glutamine amidotransferase type-1" evidence="1">
    <location>
        <begin position="1"/>
        <end position="188"/>
    </location>
</feature>
<feature type="active site" description="Nucleophile" evidence="1">
    <location>
        <position position="78"/>
    </location>
</feature>
<feature type="active site" evidence="1">
    <location>
        <position position="165"/>
    </location>
</feature>
<feature type="active site" evidence="1">
    <location>
        <position position="167"/>
    </location>
</feature>
<comment type="function">
    <text evidence="1">Catalyzes the synthesis of GMP from XMP.</text>
</comment>
<comment type="catalytic activity">
    <reaction evidence="1">
        <text>XMP + L-glutamine + ATP + H2O = GMP + L-glutamate + AMP + diphosphate + 2 H(+)</text>
        <dbReference type="Rhea" id="RHEA:11680"/>
        <dbReference type="ChEBI" id="CHEBI:15377"/>
        <dbReference type="ChEBI" id="CHEBI:15378"/>
        <dbReference type="ChEBI" id="CHEBI:29985"/>
        <dbReference type="ChEBI" id="CHEBI:30616"/>
        <dbReference type="ChEBI" id="CHEBI:33019"/>
        <dbReference type="ChEBI" id="CHEBI:57464"/>
        <dbReference type="ChEBI" id="CHEBI:58115"/>
        <dbReference type="ChEBI" id="CHEBI:58359"/>
        <dbReference type="ChEBI" id="CHEBI:456215"/>
        <dbReference type="EC" id="6.3.5.2"/>
    </reaction>
</comment>
<comment type="pathway">
    <text evidence="1">Purine metabolism; GMP biosynthesis; GMP from XMP (L-Gln route): step 1/1.</text>
</comment>
<comment type="subunit">
    <text evidence="1">Heterodimer composed of a glutamine amidotransferase subunit (A) and a GMP-binding subunit (B).</text>
</comment>
<proteinExistence type="inferred from homology"/>
<organism>
    <name type="scientific">Pyrococcus abyssi (strain GE5 / Orsay)</name>
    <dbReference type="NCBI Taxonomy" id="272844"/>
    <lineage>
        <taxon>Archaea</taxon>
        <taxon>Methanobacteriati</taxon>
        <taxon>Methanobacteriota</taxon>
        <taxon>Thermococci</taxon>
        <taxon>Thermococcales</taxon>
        <taxon>Thermococcaceae</taxon>
        <taxon>Pyrococcus</taxon>
    </lineage>
</organism>
<dbReference type="EC" id="6.3.5.2" evidence="1"/>
<dbReference type="EMBL" id="AJ248285">
    <property type="protein sequence ID" value="CAB49717.1"/>
    <property type="molecule type" value="Genomic_DNA"/>
</dbReference>
<dbReference type="EMBL" id="HE613800">
    <property type="protein sequence ID" value="CCE70203.1"/>
    <property type="molecule type" value="Genomic_DNA"/>
</dbReference>
<dbReference type="PIR" id="D75125">
    <property type="entry name" value="D75125"/>
</dbReference>
<dbReference type="RefSeq" id="WP_010867925.1">
    <property type="nucleotide sequence ID" value="NC_000868.1"/>
</dbReference>
<dbReference type="SMR" id="Q9V0I6"/>
<dbReference type="STRING" id="272844.PAB0549"/>
<dbReference type="MEROPS" id="C26.A31"/>
<dbReference type="KEGG" id="pab:PAB0549"/>
<dbReference type="PATRIC" id="fig|272844.11.peg.846"/>
<dbReference type="eggNOG" id="arCOG00087">
    <property type="taxonomic scope" value="Archaea"/>
</dbReference>
<dbReference type="HOGENOM" id="CLU_014340_1_4_2"/>
<dbReference type="OrthoDB" id="10772at2157"/>
<dbReference type="PhylomeDB" id="Q9V0I6"/>
<dbReference type="UniPathway" id="UPA00189">
    <property type="reaction ID" value="UER00296"/>
</dbReference>
<dbReference type="Proteomes" id="UP000000810">
    <property type="component" value="Chromosome"/>
</dbReference>
<dbReference type="Proteomes" id="UP000009139">
    <property type="component" value="Chromosome"/>
</dbReference>
<dbReference type="GO" id="GO:0005829">
    <property type="term" value="C:cytosol"/>
    <property type="evidence" value="ECO:0007669"/>
    <property type="project" value="TreeGrafter"/>
</dbReference>
<dbReference type="GO" id="GO:0005524">
    <property type="term" value="F:ATP binding"/>
    <property type="evidence" value="ECO:0007669"/>
    <property type="project" value="UniProtKB-KW"/>
</dbReference>
<dbReference type="GO" id="GO:0003921">
    <property type="term" value="F:GMP synthase activity"/>
    <property type="evidence" value="ECO:0007669"/>
    <property type="project" value="TreeGrafter"/>
</dbReference>
<dbReference type="CDD" id="cd01742">
    <property type="entry name" value="GATase1_GMP_Synthase"/>
    <property type="match status" value="1"/>
</dbReference>
<dbReference type="FunFam" id="3.40.50.880:FF:000047">
    <property type="entry name" value="GMP synthase [glutamine-hydrolyzing] subunit A"/>
    <property type="match status" value="1"/>
</dbReference>
<dbReference type="Gene3D" id="3.40.50.880">
    <property type="match status" value="1"/>
</dbReference>
<dbReference type="HAMAP" id="MF_01510">
    <property type="entry name" value="GMP_synthase_A"/>
    <property type="match status" value="1"/>
</dbReference>
<dbReference type="InterPro" id="IPR029062">
    <property type="entry name" value="Class_I_gatase-like"/>
</dbReference>
<dbReference type="InterPro" id="IPR017926">
    <property type="entry name" value="GATASE"/>
</dbReference>
<dbReference type="InterPro" id="IPR004739">
    <property type="entry name" value="GMP_synth_GATase"/>
</dbReference>
<dbReference type="InterPro" id="IPR023686">
    <property type="entry name" value="GMP_synthase_A"/>
</dbReference>
<dbReference type="NCBIfam" id="TIGR00888">
    <property type="entry name" value="guaA_Nterm"/>
    <property type="match status" value="1"/>
</dbReference>
<dbReference type="NCBIfam" id="NF001975">
    <property type="entry name" value="PRK00758.1"/>
    <property type="match status" value="1"/>
</dbReference>
<dbReference type="PANTHER" id="PTHR11922:SF2">
    <property type="entry name" value="GMP SYNTHASE [GLUTAMINE-HYDROLYZING]"/>
    <property type="match status" value="1"/>
</dbReference>
<dbReference type="PANTHER" id="PTHR11922">
    <property type="entry name" value="GMP SYNTHASE-RELATED"/>
    <property type="match status" value="1"/>
</dbReference>
<dbReference type="Pfam" id="PF00117">
    <property type="entry name" value="GATase"/>
    <property type="match status" value="1"/>
</dbReference>
<dbReference type="PRINTS" id="PR00097">
    <property type="entry name" value="ANTSNTHASEII"/>
</dbReference>
<dbReference type="PRINTS" id="PR00099">
    <property type="entry name" value="CPSGATASE"/>
</dbReference>
<dbReference type="PRINTS" id="PR00096">
    <property type="entry name" value="GATASE"/>
</dbReference>
<dbReference type="SUPFAM" id="SSF52317">
    <property type="entry name" value="Class I glutamine amidotransferase-like"/>
    <property type="match status" value="1"/>
</dbReference>
<dbReference type="PROSITE" id="PS51273">
    <property type="entry name" value="GATASE_TYPE_1"/>
    <property type="match status" value="1"/>
</dbReference>
<accession>Q9V0I6</accession>
<accession>G8ZH08</accession>
<sequence>MIVIMDNGGQYVHRIWRTLRYIGVESKIIPNTTPLEDIKAMNPSGIIFSGGPSLENTGNCEKILENYDEFNVPILGICLGHQLIAKFFGGKVGRGEKAEYSLVEIEILEEDEIFKGLPRKLRVWESHMDEVKELPPNFKVLARSETCPIEAMKHEELPIYGVQFHPEVAHTEHGEDILRNFAKLCGEL</sequence>
<gene>
    <name evidence="1" type="primary">guaAA</name>
    <name type="synonym">guaA-N</name>
    <name type="ordered locus">PYRAB08030</name>
    <name type="ORF">PAB0549</name>
</gene>
<evidence type="ECO:0000255" key="1">
    <source>
        <dbReference type="HAMAP-Rule" id="MF_01510"/>
    </source>
</evidence>
<reference key="1">
    <citation type="journal article" date="2003" name="Mol. Microbiol.">
        <title>An integrated analysis of the genome of the hyperthermophilic archaeon Pyrococcus abyssi.</title>
        <authorList>
            <person name="Cohen G.N."/>
            <person name="Barbe V."/>
            <person name="Flament D."/>
            <person name="Galperin M."/>
            <person name="Heilig R."/>
            <person name="Lecompte O."/>
            <person name="Poch O."/>
            <person name="Prieur D."/>
            <person name="Querellou J."/>
            <person name="Ripp R."/>
            <person name="Thierry J.-C."/>
            <person name="Van der Oost J."/>
            <person name="Weissenbach J."/>
            <person name="Zivanovic Y."/>
            <person name="Forterre P."/>
        </authorList>
    </citation>
    <scope>NUCLEOTIDE SEQUENCE [LARGE SCALE GENOMIC DNA]</scope>
    <source>
        <strain>GE5 / Orsay</strain>
    </source>
</reference>
<reference key="2">
    <citation type="journal article" date="2012" name="Curr. Microbiol.">
        <title>Re-annotation of two hyperthermophilic archaea Pyrococcus abyssi GE5 and Pyrococcus furiosus DSM 3638.</title>
        <authorList>
            <person name="Gao J."/>
            <person name="Wang J."/>
        </authorList>
    </citation>
    <scope>GENOME REANNOTATION</scope>
    <source>
        <strain>GE5 / Orsay</strain>
    </source>
</reference>
<keyword id="KW-0067">ATP-binding</keyword>
<keyword id="KW-0315">Glutamine amidotransferase</keyword>
<keyword id="KW-0332">GMP biosynthesis</keyword>
<keyword id="KW-0436">Ligase</keyword>
<keyword id="KW-0547">Nucleotide-binding</keyword>
<keyword id="KW-0658">Purine biosynthesis</keyword>
<protein>
    <recommendedName>
        <fullName evidence="1">GMP synthase [glutamine-hydrolyzing] subunit A</fullName>
        <ecNumber evidence="1">6.3.5.2</ecNumber>
    </recommendedName>
    <alternativeName>
        <fullName evidence="1">Glutamine amidotransferase</fullName>
    </alternativeName>
</protein>